<protein>
    <recommendedName>
        <fullName>Endoplasmic reticulum membrane protein complex subunit 7</fullName>
    </recommendedName>
    <alternativeName>
        <fullName>ER membrane protein complex subunit 7</fullName>
    </alternativeName>
</protein>
<sequence length="242" mass="26445">MAAALWGFFPVLLLLLLSGDVQSSEVPGAAAEGSGGSGVGIGDRFKIEGRAVVPGVKPQDWISAARVLVDGEEHVGFLKTDGSFVVHDIPSGSYVVEVVSPAYRFDPVRVDITSKGKMRARYVNHIKTSEVVRLPYPLQMKSSGPPSYFIKRESWGWTDFLMNPMVMMMVLPLLIFVLLPKVVNTSDPDMRREMEQSMNMLNSNHELPDVSEFMTRLFSSKSSGKSSSGSSKTGKSGAGKRR</sequence>
<keyword id="KW-0256">Endoplasmic reticulum</keyword>
<keyword id="KW-0472">Membrane</keyword>
<keyword id="KW-1185">Reference proteome</keyword>
<keyword id="KW-0732">Signal</keyword>
<keyword id="KW-0812">Transmembrane</keyword>
<keyword id="KW-1133">Transmembrane helix</keyword>
<feature type="signal peptide" evidence="1">
    <location>
        <begin position="1"/>
        <end position="23"/>
    </location>
</feature>
<feature type="chain" id="PRO_0000240861" description="Endoplasmic reticulum membrane protein complex subunit 7">
    <location>
        <begin position="24"/>
        <end position="242"/>
    </location>
</feature>
<feature type="topological domain" description="Lumenal" evidence="1">
    <location>
        <begin position="24"/>
        <end position="159"/>
    </location>
</feature>
<feature type="transmembrane region" description="Helical" evidence="2">
    <location>
        <begin position="160"/>
        <end position="180"/>
    </location>
</feature>
<feature type="topological domain" description="Cytoplasmic" evidence="1">
    <location>
        <begin position="181"/>
        <end position="242"/>
    </location>
</feature>
<feature type="region of interest" description="Disordered" evidence="3">
    <location>
        <begin position="217"/>
        <end position="242"/>
    </location>
</feature>
<feature type="compositionally biased region" description="Low complexity" evidence="3">
    <location>
        <begin position="219"/>
        <end position="235"/>
    </location>
</feature>
<gene>
    <name type="primary">EMC7</name>
    <name type="ORF">QtsA-20627</name>
</gene>
<comment type="function">
    <text evidence="1">Part of the endoplasmic reticulum membrane protein complex (EMC) that enables the energy-independent insertion into endoplasmic reticulum membranes of newly synthesized membrane proteins. Preferentially accommodates proteins with transmembrane domains that are weakly hydrophobic or contain destabilizing features such as charged and aromatic residues. Involved in the cotranslational insertion of multi-pass membrane proteins in which stop-transfer membrane-anchor sequences become ER membrane spanning helices. It is also required for the post-translational insertion of tail-anchored/TA proteins in endoplasmic reticulum membranes. By mediating the proper cotranslational insertion of N-terminal transmembrane domains in an N-exo topology, with translocated N-terminus in the lumen of the ER, controls the topology of multi-pass membrane proteins like the G protein-coupled receptors. By regulating the insertion of various proteins in membranes, it is indirectly involved in many cellular processes.</text>
</comment>
<comment type="subunit">
    <text evidence="1">Component of the ER membrane protein complex (EMC).</text>
</comment>
<comment type="subcellular location">
    <subcellularLocation>
        <location evidence="1">Endoplasmic reticulum membrane</location>
        <topology evidence="1">Single-pass type I membrane protein</topology>
    </subcellularLocation>
</comment>
<comment type="similarity">
    <text evidence="4">Belongs to the EMC7 family.</text>
</comment>
<proteinExistence type="evidence at transcript level"/>
<dbReference type="EMBL" id="AB169441">
    <property type="protein sequence ID" value="BAE01523.1"/>
    <property type="molecule type" value="mRNA"/>
</dbReference>
<dbReference type="RefSeq" id="NP_001271760.1">
    <property type="nucleotide sequence ID" value="NM_001284831.1"/>
</dbReference>
<dbReference type="RefSeq" id="XP_045251177.1">
    <property type="nucleotide sequence ID" value="XM_045395242.2"/>
</dbReference>
<dbReference type="SMR" id="Q4R5V2"/>
<dbReference type="STRING" id="9541.ENSMFAP00000037657"/>
<dbReference type="GeneID" id="101866934"/>
<dbReference type="VEuPathDB" id="HostDB:ENSMFAG00000038054"/>
<dbReference type="eggNOG" id="KOG3306">
    <property type="taxonomic scope" value="Eukaryota"/>
</dbReference>
<dbReference type="OMA" id="EMENMQM"/>
<dbReference type="Proteomes" id="UP000233100">
    <property type="component" value="Chromosome 7"/>
</dbReference>
<dbReference type="GO" id="GO:0072546">
    <property type="term" value="C:EMC complex"/>
    <property type="evidence" value="ECO:0000250"/>
    <property type="project" value="UniProtKB"/>
</dbReference>
<dbReference type="GO" id="GO:0005789">
    <property type="term" value="C:endoplasmic reticulum membrane"/>
    <property type="evidence" value="ECO:0000250"/>
    <property type="project" value="UniProtKB"/>
</dbReference>
<dbReference type="GO" id="GO:0016020">
    <property type="term" value="C:membrane"/>
    <property type="evidence" value="ECO:0000250"/>
    <property type="project" value="UniProtKB"/>
</dbReference>
<dbReference type="GO" id="GO:0030246">
    <property type="term" value="F:carbohydrate binding"/>
    <property type="evidence" value="ECO:0007669"/>
    <property type="project" value="InterPro"/>
</dbReference>
<dbReference type="GO" id="GO:0045050">
    <property type="term" value="P:protein insertion into ER membrane by stop-transfer membrane-anchor sequence"/>
    <property type="evidence" value="ECO:0000250"/>
    <property type="project" value="UniProtKB"/>
</dbReference>
<dbReference type="GO" id="GO:0071816">
    <property type="term" value="P:tail-anchored membrane protein insertion into ER membrane"/>
    <property type="evidence" value="ECO:0000250"/>
    <property type="project" value="UniProtKB"/>
</dbReference>
<dbReference type="InterPro" id="IPR013784">
    <property type="entry name" value="Carb-bd-like_fold"/>
</dbReference>
<dbReference type="InterPro" id="IPR039163">
    <property type="entry name" value="EMC7"/>
</dbReference>
<dbReference type="InterPro" id="IPR019008">
    <property type="entry name" value="EMC7_beta_sandwich"/>
</dbReference>
<dbReference type="PANTHER" id="PTHR13605">
    <property type="entry name" value="ER MEMBRANE PROTEIN COMPLEX SUBUNIT 7"/>
    <property type="match status" value="1"/>
</dbReference>
<dbReference type="PANTHER" id="PTHR13605:SF4">
    <property type="entry name" value="ER MEMBRANE PROTEIN COMPLEX SUBUNIT 7"/>
    <property type="match status" value="1"/>
</dbReference>
<dbReference type="Pfam" id="PF09430">
    <property type="entry name" value="EMC7_beta-sandw"/>
    <property type="match status" value="1"/>
</dbReference>
<dbReference type="SUPFAM" id="SSF49452">
    <property type="entry name" value="Starch-binding domain-like"/>
    <property type="match status" value="1"/>
</dbReference>
<reference key="1">
    <citation type="submission" date="2005-06" db="EMBL/GenBank/DDBJ databases">
        <title>DNA sequences of macaque genes expressed in brain or testis and its evolutionary implications.</title>
        <authorList>
            <consortium name="International consortium for macaque cDNA sequencing and analysis"/>
        </authorList>
    </citation>
    <scope>NUCLEOTIDE SEQUENCE [LARGE SCALE MRNA]</scope>
    <source>
        <tissue>Testis</tissue>
    </source>
</reference>
<accession>Q4R5V2</accession>
<name>EMC7_MACFA</name>
<organism>
    <name type="scientific">Macaca fascicularis</name>
    <name type="common">Crab-eating macaque</name>
    <name type="synonym">Cynomolgus monkey</name>
    <dbReference type="NCBI Taxonomy" id="9541"/>
    <lineage>
        <taxon>Eukaryota</taxon>
        <taxon>Metazoa</taxon>
        <taxon>Chordata</taxon>
        <taxon>Craniata</taxon>
        <taxon>Vertebrata</taxon>
        <taxon>Euteleostomi</taxon>
        <taxon>Mammalia</taxon>
        <taxon>Eutheria</taxon>
        <taxon>Euarchontoglires</taxon>
        <taxon>Primates</taxon>
        <taxon>Haplorrhini</taxon>
        <taxon>Catarrhini</taxon>
        <taxon>Cercopithecidae</taxon>
        <taxon>Cercopithecinae</taxon>
        <taxon>Macaca</taxon>
    </lineage>
</organism>
<evidence type="ECO:0000250" key="1">
    <source>
        <dbReference type="UniProtKB" id="Q9NPA0"/>
    </source>
</evidence>
<evidence type="ECO:0000255" key="2"/>
<evidence type="ECO:0000256" key="3">
    <source>
        <dbReference type="SAM" id="MobiDB-lite"/>
    </source>
</evidence>
<evidence type="ECO:0000305" key="4"/>